<accession>A6LMV9</accession>
<proteinExistence type="inferred from homology"/>
<organism>
    <name type="scientific">Thermosipho melanesiensis (strain DSM 12029 / CIP 104789 / BI429)</name>
    <dbReference type="NCBI Taxonomy" id="391009"/>
    <lineage>
        <taxon>Bacteria</taxon>
        <taxon>Thermotogati</taxon>
        <taxon>Thermotogota</taxon>
        <taxon>Thermotogae</taxon>
        <taxon>Thermotogales</taxon>
        <taxon>Fervidobacteriaceae</taxon>
        <taxon>Thermosipho</taxon>
    </lineage>
</organism>
<protein>
    <recommendedName>
        <fullName evidence="1">Ribosome maturation factor RimP</fullName>
    </recommendedName>
</protein>
<feature type="chain" id="PRO_0000384799" description="Ribosome maturation factor RimP">
    <location>
        <begin position="1"/>
        <end position="147"/>
    </location>
</feature>
<dbReference type="EMBL" id="CP000716">
    <property type="protein sequence ID" value="ABR31260.1"/>
    <property type="molecule type" value="Genomic_DNA"/>
</dbReference>
<dbReference type="RefSeq" id="WP_012057619.1">
    <property type="nucleotide sequence ID" value="NC_009616.1"/>
</dbReference>
<dbReference type="SMR" id="A6LMV9"/>
<dbReference type="STRING" id="391009.Tmel_1413"/>
<dbReference type="KEGG" id="tme:Tmel_1413"/>
<dbReference type="eggNOG" id="COG0779">
    <property type="taxonomic scope" value="Bacteria"/>
</dbReference>
<dbReference type="HOGENOM" id="CLU_070525_2_2_0"/>
<dbReference type="OrthoDB" id="9805006at2"/>
<dbReference type="Proteomes" id="UP000001110">
    <property type="component" value="Chromosome"/>
</dbReference>
<dbReference type="GO" id="GO:0005829">
    <property type="term" value="C:cytosol"/>
    <property type="evidence" value="ECO:0007669"/>
    <property type="project" value="TreeGrafter"/>
</dbReference>
<dbReference type="GO" id="GO:0000028">
    <property type="term" value="P:ribosomal small subunit assembly"/>
    <property type="evidence" value="ECO:0007669"/>
    <property type="project" value="TreeGrafter"/>
</dbReference>
<dbReference type="GO" id="GO:0006412">
    <property type="term" value="P:translation"/>
    <property type="evidence" value="ECO:0007669"/>
    <property type="project" value="TreeGrafter"/>
</dbReference>
<dbReference type="CDD" id="cd01734">
    <property type="entry name" value="YlxS_C"/>
    <property type="match status" value="1"/>
</dbReference>
<dbReference type="FunFam" id="3.30.300.70:FF:000001">
    <property type="entry name" value="Ribosome maturation factor RimP"/>
    <property type="match status" value="1"/>
</dbReference>
<dbReference type="Gene3D" id="2.30.30.180">
    <property type="entry name" value="Ribosome maturation factor RimP, C-terminal domain"/>
    <property type="match status" value="1"/>
</dbReference>
<dbReference type="Gene3D" id="3.30.300.70">
    <property type="entry name" value="RimP-like superfamily, N-terminal"/>
    <property type="match status" value="1"/>
</dbReference>
<dbReference type="HAMAP" id="MF_01077">
    <property type="entry name" value="RimP"/>
    <property type="match status" value="1"/>
</dbReference>
<dbReference type="InterPro" id="IPR003728">
    <property type="entry name" value="Ribosome_maturation_RimP"/>
</dbReference>
<dbReference type="InterPro" id="IPR028998">
    <property type="entry name" value="RimP_C"/>
</dbReference>
<dbReference type="InterPro" id="IPR036847">
    <property type="entry name" value="RimP_C_sf"/>
</dbReference>
<dbReference type="InterPro" id="IPR028989">
    <property type="entry name" value="RimP_N"/>
</dbReference>
<dbReference type="InterPro" id="IPR035956">
    <property type="entry name" value="RimP_N_sf"/>
</dbReference>
<dbReference type="PANTHER" id="PTHR33867">
    <property type="entry name" value="RIBOSOME MATURATION FACTOR RIMP"/>
    <property type="match status" value="1"/>
</dbReference>
<dbReference type="PANTHER" id="PTHR33867:SF1">
    <property type="entry name" value="RIBOSOME MATURATION FACTOR RIMP"/>
    <property type="match status" value="1"/>
</dbReference>
<dbReference type="Pfam" id="PF17384">
    <property type="entry name" value="DUF150_C"/>
    <property type="match status" value="1"/>
</dbReference>
<dbReference type="Pfam" id="PF02576">
    <property type="entry name" value="RimP_N"/>
    <property type="match status" value="1"/>
</dbReference>
<dbReference type="SUPFAM" id="SSF74942">
    <property type="entry name" value="YhbC-like, C-terminal domain"/>
    <property type="match status" value="1"/>
</dbReference>
<dbReference type="SUPFAM" id="SSF75420">
    <property type="entry name" value="YhbC-like, N-terminal domain"/>
    <property type="match status" value="1"/>
</dbReference>
<sequence length="147" mass="17492">MKDIVSQVKDIAQKICEEFHLELFDVKYYNKSGRWFLEIIIDNPYDYISTKDCENVSRKLEFELDKINIIPNKYYLTVSSPGLNRPLRNVKDFERFTGKKAKIKTRENTYIGYIKNVVDNIITFETDGKFIEFKFEEIKKANLEIDI</sequence>
<keyword id="KW-0963">Cytoplasm</keyword>
<keyword id="KW-0690">Ribosome biogenesis</keyword>
<comment type="function">
    <text evidence="1">Required for maturation of 30S ribosomal subunits.</text>
</comment>
<comment type="subcellular location">
    <subcellularLocation>
        <location evidence="1">Cytoplasm</location>
    </subcellularLocation>
</comment>
<comment type="similarity">
    <text evidence="1">Belongs to the RimP family.</text>
</comment>
<evidence type="ECO:0000255" key="1">
    <source>
        <dbReference type="HAMAP-Rule" id="MF_01077"/>
    </source>
</evidence>
<reference key="1">
    <citation type="submission" date="2007-05" db="EMBL/GenBank/DDBJ databases">
        <title>Complete sequence of Thermosipho melanesiensis BI429.</title>
        <authorList>
            <consortium name="US DOE Joint Genome Institute"/>
            <person name="Copeland A."/>
            <person name="Lucas S."/>
            <person name="Lapidus A."/>
            <person name="Barry K."/>
            <person name="Glavina del Rio T."/>
            <person name="Dalin E."/>
            <person name="Tice H."/>
            <person name="Pitluck S."/>
            <person name="Chertkov O."/>
            <person name="Brettin T."/>
            <person name="Bruce D."/>
            <person name="Detter J.C."/>
            <person name="Han C."/>
            <person name="Schmutz J."/>
            <person name="Larimer F."/>
            <person name="Land M."/>
            <person name="Hauser L."/>
            <person name="Kyrpides N."/>
            <person name="Mikhailova N."/>
            <person name="Nelson K."/>
            <person name="Gogarten J.P."/>
            <person name="Noll K."/>
            <person name="Richardson P."/>
        </authorList>
    </citation>
    <scope>NUCLEOTIDE SEQUENCE [LARGE SCALE GENOMIC DNA]</scope>
    <source>
        <strain>DSM 12029 / CIP 104789 / BI429</strain>
    </source>
</reference>
<name>RIMP_THEM4</name>
<gene>
    <name evidence="1" type="primary">rimP</name>
    <name type="ordered locus">Tmel_1413</name>
</gene>